<sequence>MSRIGKKPVPVPAGVTASVEGQTVKAKGAKGELSFVVHDEVLVKMEDGAVRVDPRDQSKEARSKWGMSRTMISNIFVGVKDGFEKKLEISGVGYRAAMQGKNLQLSLGFSHEVVYDVPAGITVAVPKPTEIVVTGIDKQQVGQVAAEIREYRGPEPYKGKGVKYAGEKIVRKEGKKK</sequence>
<name>RL6_BRUSU</name>
<evidence type="ECO:0000255" key="1">
    <source>
        <dbReference type="HAMAP-Rule" id="MF_01365"/>
    </source>
</evidence>
<evidence type="ECO:0000305" key="2"/>
<protein>
    <recommendedName>
        <fullName evidence="1">Large ribosomal subunit protein uL6</fullName>
    </recommendedName>
    <alternativeName>
        <fullName evidence="2">50S ribosomal protein L6</fullName>
    </alternativeName>
</protein>
<dbReference type="EMBL" id="AE014291">
    <property type="protein sequence ID" value="AAN30137.1"/>
    <property type="molecule type" value="Genomic_DNA"/>
</dbReference>
<dbReference type="EMBL" id="CP002997">
    <property type="protein sequence ID" value="AEM18555.1"/>
    <property type="molecule type" value="Genomic_DNA"/>
</dbReference>
<dbReference type="RefSeq" id="WP_004683920.1">
    <property type="nucleotide sequence ID" value="NZ_KN046804.1"/>
</dbReference>
<dbReference type="SMR" id="Q8G087"/>
<dbReference type="GeneID" id="97533539"/>
<dbReference type="KEGG" id="bms:BR1218"/>
<dbReference type="KEGG" id="bsi:BS1330_I1214"/>
<dbReference type="PATRIC" id="fig|204722.21.peg.2258"/>
<dbReference type="HOGENOM" id="CLU_065464_1_2_5"/>
<dbReference type="PhylomeDB" id="Q8G087"/>
<dbReference type="Proteomes" id="UP000007104">
    <property type="component" value="Chromosome I"/>
</dbReference>
<dbReference type="GO" id="GO:0022625">
    <property type="term" value="C:cytosolic large ribosomal subunit"/>
    <property type="evidence" value="ECO:0007669"/>
    <property type="project" value="TreeGrafter"/>
</dbReference>
<dbReference type="GO" id="GO:0019843">
    <property type="term" value="F:rRNA binding"/>
    <property type="evidence" value="ECO:0007669"/>
    <property type="project" value="UniProtKB-UniRule"/>
</dbReference>
<dbReference type="GO" id="GO:0003735">
    <property type="term" value="F:structural constituent of ribosome"/>
    <property type="evidence" value="ECO:0007669"/>
    <property type="project" value="InterPro"/>
</dbReference>
<dbReference type="GO" id="GO:0002181">
    <property type="term" value="P:cytoplasmic translation"/>
    <property type="evidence" value="ECO:0007669"/>
    <property type="project" value="TreeGrafter"/>
</dbReference>
<dbReference type="FunFam" id="3.90.930.12:FF:000001">
    <property type="entry name" value="50S ribosomal protein L6"/>
    <property type="match status" value="1"/>
</dbReference>
<dbReference type="Gene3D" id="3.90.930.12">
    <property type="entry name" value="Ribosomal protein L6, alpha-beta domain"/>
    <property type="match status" value="2"/>
</dbReference>
<dbReference type="HAMAP" id="MF_01365_B">
    <property type="entry name" value="Ribosomal_uL6_B"/>
    <property type="match status" value="1"/>
</dbReference>
<dbReference type="InterPro" id="IPR000702">
    <property type="entry name" value="Ribosomal_uL6-like"/>
</dbReference>
<dbReference type="InterPro" id="IPR036789">
    <property type="entry name" value="Ribosomal_uL6-like_a/b-dom_sf"/>
</dbReference>
<dbReference type="InterPro" id="IPR020040">
    <property type="entry name" value="Ribosomal_uL6_a/b-dom"/>
</dbReference>
<dbReference type="InterPro" id="IPR019906">
    <property type="entry name" value="Ribosomal_uL6_bac-type"/>
</dbReference>
<dbReference type="InterPro" id="IPR002358">
    <property type="entry name" value="Ribosomal_uL6_CS"/>
</dbReference>
<dbReference type="NCBIfam" id="TIGR03654">
    <property type="entry name" value="L6_bact"/>
    <property type="match status" value="1"/>
</dbReference>
<dbReference type="PANTHER" id="PTHR11655">
    <property type="entry name" value="60S/50S RIBOSOMAL PROTEIN L6/L9"/>
    <property type="match status" value="1"/>
</dbReference>
<dbReference type="PANTHER" id="PTHR11655:SF14">
    <property type="entry name" value="LARGE RIBOSOMAL SUBUNIT PROTEIN UL6M"/>
    <property type="match status" value="1"/>
</dbReference>
<dbReference type="Pfam" id="PF00347">
    <property type="entry name" value="Ribosomal_L6"/>
    <property type="match status" value="2"/>
</dbReference>
<dbReference type="PIRSF" id="PIRSF002162">
    <property type="entry name" value="Ribosomal_L6"/>
    <property type="match status" value="1"/>
</dbReference>
<dbReference type="PRINTS" id="PR00059">
    <property type="entry name" value="RIBOSOMALL6"/>
</dbReference>
<dbReference type="SUPFAM" id="SSF56053">
    <property type="entry name" value="Ribosomal protein L6"/>
    <property type="match status" value="2"/>
</dbReference>
<dbReference type="PROSITE" id="PS00525">
    <property type="entry name" value="RIBOSOMAL_L6_1"/>
    <property type="match status" value="1"/>
</dbReference>
<proteinExistence type="inferred from homology"/>
<gene>
    <name evidence="1" type="primary">rplF</name>
    <name type="ordered locus">BR1218</name>
    <name type="ordered locus">BS1330_I1214</name>
</gene>
<feature type="chain" id="PRO_0000265229" description="Large ribosomal subunit protein uL6">
    <location>
        <begin position="1"/>
        <end position="177"/>
    </location>
</feature>
<reference key="1">
    <citation type="journal article" date="2002" name="Proc. Natl. Acad. Sci. U.S.A.">
        <title>The Brucella suis genome reveals fundamental similarities between animal and plant pathogens and symbionts.</title>
        <authorList>
            <person name="Paulsen I.T."/>
            <person name="Seshadri R."/>
            <person name="Nelson K.E."/>
            <person name="Eisen J.A."/>
            <person name="Heidelberg J.F."/>
            <person name="Read T.D."/>
            <person name="Dodson R.J."/>
            <person name="Umayam L.A."/>
            <person name="Brinkac L.M."/>
            <person name="Beanan M.J."/>
            <person name="Daugherty S.C."/>
            <person name="DeBoy R.T."/>
            <person name="Durkin A.S."/>
            <person name="Kolonay J.F."/>
            <person name="Madupu R."/>
            <person name="Nelson W.C."/>
            <person name="Ayodeji B."/>
            <person name="Kraul M."/>
            <person name="Shetty J."/>
            <person name="Malek J.A."/>
            <person name="Van Aken S.E."/>
            <person name="Riedmuller S."/>
            <person name="Tettelin H."/>
            <person name="Gill S.R."/>
            <person name="White O."/>
            <person name="Salzberg S.L."/>
            <person name="Hoover D.L."/>
            <person name="Lindler L.E."/>
            <person name="Halling S.M."/>
            <person name="Boyle S.M."/>
            <person name="Fraser C.M."/>
        </authorList>
    </citation>
    <scope>NUCLEOTIDE SEQUENCE [LARGE SCALE GENOMIC DNA]</scope>
    <source>
        <strain>1330</strain>
    </source>
</reference>
<reference key="2">
    <citation type="journal article" date="2011" name="J. Bacteriol.">
        <title>Revised genome sequence of Brucella suis 1330.</title>
        <authorList>
            <person name="Tae H."/>
            <person name="Shallom S."/>
            <person name="Settlage R."/>
            <person name="Preston D."/>
            <person name="Adams L.G."/>
            <person name="Garner H.R."/>
        </authorList>
    </citation>
    <scope>NUCLEOTIDE SEQUENCE [LARGE SCALE GENOMIC DNA]</scope>
    <source>
        <strain>1330</strain>
    </source>
</reference>
<keyword id="KW-0687">Ribonucleoprotein</keyword>
<keyword id="KW-0689">Ribosomal protein</keyword>
<keyword id="KW-0694">RNA-binding</keyword>
<keyword id="KW-0699">rRNA-binding</keyword>
<comment type="function">
    <text evidence="1">This protein binds to the 23S rRNA, and is important in its secondary structure. It is located near the subunit interface in the base of the L7/L12 stalk, and near the tRNA binding site of the peptidyltransferase center.</text>
</comment>
<comment type="subunit">
    <text evidence="1">Part of the 50S ribosomal subunit.</text>
</comment>
<comment type="similarity">
    <text evidence="1">Belongs to the universal ribosomal protein uL6 family.</text>
</comment>
<accession>Q8G087</accession>
<accession>G0KAD9</accession>
<organism>
    <name type="scientific">Brucella suis biovar 1 (strain 1330)</name>
    <dbReference type="NCBI Taxonomy" id="204722"/>
    <lineage>
        <taxon>Bacteria</taxon>
        <taxon>Pseudomonadati</taxon>
        <taxon>Pseudomonadota</taxon>
        <taxon>Alphaproteobacteria</taxon>
        <taxon>Hyphomicrobiales</taxon>
        <taxon>Brucellaceae</taxon>
        <taxon>Brucella/Ochrobactrum group</taxon>
        <taxon>Brucella</taxon>
    </lineage>
</organism>